<keyword id="KW-0002">3D-structure</keyword>
<keyword id="KW-0067">ATP-binding</keyword>
<keyword id="KW-0157">Chromophore</keyword>
<keyword id="KW-0418">Kinase</keyword>
<keyword id="KW-0547">Nucleotide-binding</keyword>
<keyword id="KW-0597">Phosphoprotein</keyword>
<keyword id="KW-0600">Photoreceptor protein</keyword>
<keyword id="KW-0675">Receptor</keyword>
<keyword id="KW-1185">Reference proteome</keyword>
<keyword id="KW-0716">Sensory transduction</keyword>
<keyword id="KW-0804">Transcription</keyword>
<keyword id="KW-0805">Transcription regulation</keyword>
<keyword id="KW-0808">Transferase</keyword>
<feature type="chain" id="PRO_0000171998" description="Cyanobacterial phytochrome B">
    <location>
        <begin position="1"/>
        <end position="751"/>
    </location>
</feature>
<feature type="domain" description="GAF">
    <location>
        <begin position="152"/>
        <end position="320"/>
    </location>
</feature>
<feature type="domain" description="Histidine kinase" evidence="2">
    <location>
        <begin position="536"/>
        <end position="751"/>
    </location>
</feature>
<feature type="region of interest" description="Chromophore binding domain">
    <location>
        <begin position="22"/>
        <end position="511"/>
    </location>
</feature>
<feature type="binding site" description="covalent" evidence="1">
    <location>
        <position position="17"/>
    </location>
    <ligand>
        <name>a tetrapyrrole</name>
        <dbReference type="ChEBI" id="CHEBI:26932"/>
    </ligand>
</feature>
<feature type="modified residue" description="Phosphohistidine; by autocatalysis" evidence="2">
    <location>
        <position position="539"/>
    </location>
</feature>
<gene>
    <name type="primary">bphB</name>
    <name type="ordered locus">all2899</name>
</gene>
<sequence>MNINDITIPFQVDLSNCSKEPIHIPGLIQPHGVLLVLQEVDLTILQVSNNTFNILGRHPEQLLNQHLSCLLEAEQLSLLKDCLAQEDLQIINPLEFIIKSHNESISFDVIAHRSNNLLILELEANLSDKTHSFFRFYHLVKLAMLKLQGTATTTEISQILAQEVRKITGFDRVMVYRFDEQWNGKVIAEVKPEYLTSYLGLNYPASDIPQQARKLYSQNWLRLIPDAKYQPVPIVPINNPLNDQPLDLSRSVLRSVSPLHIEYMQNMGVTASMSISIMKNQKLWGLIACHHQSPKYIPYEIRSACEFLGQMTSVEMSAKEDSEDTEDKIQVKSVHSKLVQYMSAENDFINALIDHQPNILDLVKAQGAAVCFNGNSCTVGQVPPMPDIQVLVEWMSQNIHEEIFATDSLATVYPDAEKLRDVASGLIALSISRSQKNYILWFRPEVVRTVDWGGNPHKPVEVIANGEIRLSPRKSFDLWKETVLLKSQPWKSHEVNAALELRSAIIGIVLQKADELAQLNIELERSNQELDAFAYIASHDLKEPLRGIHNYSNFLMEDYGEIIDAPGKEKLLTLIRLTQRMEDLIDSLLHFSRLGRVDLSMQDTDLNEIVHRILDMLSGRIEETGVEIRILQLLPVVYCDRIQIGEVFSNLIANSIKYNDKANKWIEIGYIDNPPLPPTFYVRDNGIGIREKHFETIFRIFKRLHSPSKYGGGTGAGLTIAKKIVERHGGKIWVESTYGEGSTFYFTLQDV</sequence>
<protein>
    <recommendedName>
        <fullName>Cyanobacterial phytochrome B</fullName>
        <ecNumber>2.7.13.3</ecNumber>
    </recommendedName>
</protein>
<reference key="1">
    <citation type="submission" date="1999-11" db="EMBL/GenBank/DDBJ databases">
        <title>aphB, phytochrome-like gene of Anabaena 7120.</title>
        <authorList>
            <person name="Kamiya A."/>
            <person name="Kasahara M."/>
            <person name="Ohmori M."/>
        </authorList>
    </citation>
    <scope>NUCLEOTIDE SEQUENCE [GENOMIC DNA]</scope>
</reference>
<reference key="2">
    <citation type="journal article" date="2001" name="DNA Res.">
        <title>Complete genomic sequence of the filamentous nitrogen-fixing cyanobacterium Anabaena sp. strain PCC 7120.</title>
        <authorList>
            <person name="Kaneko T."/>
            <person name="Nakamura Y."/>
            <person name="Wolk C.P."/>
            <person name="Kuritz T."/>
            <person name="Sasamoto S."/>
            <person name="Watanabe A."/>
            <person name="Iriguchi M."/>
            <person name="Ishikawa A."/>
            <person name="Kawashima K."/>
            <person name="Kimura T."/>
            <person name="Kishida Y."/>
            <person name="Kohara M."/>
            <person name="Matsumoto M."/>
            <person name="Matsuno A."/>
            <person name="Muraki A."/>
            <person name="Nakazaki N."/>
            <person name="Shimpo S."/>
            <person name="Sugimoto M."/>
            <person name="Takazawa M."/>
            <person name="Yamada M."/>
            <person name="Yasuda M."/>
            <person name="Tabata S."/>
        </authorList>
    </citation>
    <scope>NUCLEOTIDE SEQUENCE [LARGE SCALE GENOMIC DNA]</scope>
    <source>
        <strain>PCC 7120 / SAG 25.82 / UTEX 2576</strain>
    </source>
</reference>
<organism>
    <name type="scientific">Nostoc sp. (strain PCC 7120 / SAG 25.82 / UTEX 2576)</name>
    <dbReference type="NCBI Taxonomy" id="103690"/>
    <lineage>
        <taxon>Bacteria</taxon>
        <taxon>Bacillati</taxon>
        <taxon>Cyanobacteriota</taxon>
        <taxon>Cyanophyceae</taxon>
        <taxon>Nostocales</taxon>
        <taxon>Nostocaceae</taxon>
        <taxon>Nostoc</taxon>
    </lineage>
</organism>
<accession>Q9R6X3</accession>
<name>PHYB_NOSS1</name>
<dbReference type="EC" id="2.7.13.3"/>
<dbReference type="EMBL" id="AB034952">
    <property type="protein sequence ID" value="BAA88060.1"/>
    <property type="molecule type" value="Genomic_DNA"/>
</dbReference>
<dbReference type="EMBL" id="BA000019">
    <property type="protein sequence ID" value="BAB74598.1"/>
    <property type="molecule type" value="Genomic_DNA"/>
</dbReference>
<dbReference type="PIR" id="AD2168">
    <property type="entry name" value="AD2168"/>
</dbReference>
<dbReference type="RefSeq" id="WP_010997050.1">
    <property type="nucleotide sequence ID" value="NZ_RSCN01000003.1"/>
</dbReference>
<dbReference type="PDB" id="9JRY">
    <property type="method" value="X-ray"/>
    <property type="resolution" value="3.35 A"/>
    <property type="chains" value="A/B=1-515"/>
</dbReference>
<dbReference type="PDBsum" id="9JRY"/>
<dbReference type="SMR" id="Q9R6X3"/>
<dbReference type="STRING" id="103690.gene:10494934"/>
<dbReference type="KEGG" id="ana:all2899"/>
<dbReference type="eggNOG" id="COG4251">
    <property type="taxonomic scope" value="Bacteria"/>
</dbReference>
<dbReference type="OrthoDB" id="9760752at2"/>
<dbReference type="BRENDA" id="2.7.13.3">
    <property type="organism ID" value="319"/>
</dbReference>
<dbReference type="Proteomes" id="UP000002483">
    <property type="component" value="Chromosome"/>
</dbReference>
<dbReference type="GO" id="GO:0005524">
    <property type="term" value="F:ATP binding"/>
    <property type="evidence" value="ECO:0007669"/>
    <property type="project" value="UniProtKB-KW"/>
</dbReference>
<dbReference type="GO" id="GO:0000156">
    <property type="term" value="F:phosphorelay response regulator activity"/>
    <property type="evidence" value="ECO:0007669"/>
    <property type="project" value="TreeGrafter"/>
</dbReference>
<dbReference type="GO" id="GO:0000155">
    <property type="term" value="F:phosphorelay sensor kinase activity"/>
    <property type="evidence" value="ECO:0007669"/>
    <property type="project" value="InterPro"/>
</dbReference>
<dbReference type="GO" id="GO:0009881">
    <property type="term" value="F:photoreceptor activity"/>
    <property type="evidence" value="ECO:0007669"/>
    <property type="project" value="UniProtKB-KW"/>
</dbReference>
<dbReference type="GO" id="GO:0030295">
    <property type="term" value="F:protein kinase activator activity"/>
    <property type="evidence" value="ECO:0007669"/>
    <property type="project" value="TreeGrafter"/>
</dbReference>
<dbReference type="GO" id="GO:0009584">
    <property type="term" value="P:detection of visible light"/>
    <property type="evidence" value="ECO:0007669"/>
    <property type="project" value="InterPro"/>
</dbReference>
<dbReference type="GO" id="GO:0007234">
    <property type="term" value="P:osmosensory signaling via phosphorelay pathway"/>
    <property type="evidence" value="ECO:0007669"/>
    <property type="project" value="TreeGrafter"/>
</dbReference>
<dbReference type="GO" id="GO:0006355">
    <property type="term" value="P:regulation of DNA-templated transcription"/>
    <property type="evidence" value="ECO:0007669"/>
    <property type="project" value="InterPro"/>
</dbReference>
<dbReference type="CDD" id="cd16921">
    <property type="entry name" value="HATPase_FilI-like"/>
    <property type="match status" value="1"/>
</dbReference>
<dbReference type="CDD" id="cd00082">
    <property type="entry name" value="HisKA"/>
    <property type="match status" value="1"/>
</dbReference>
<dbReference type="FunFam" id="3.30.565.10:FF:000006">
    <property type="entry name" value="Sensor histidine kinase WalK"/>
    <property type="match status" value="1"/>
</dbReference>
<dbReference type="Gene3D" id="1.10.287.130">
    <property type="match status" value="1"/>
</dbReference>
<dbReference type="Gene3D" id="3.30.450.270">
    <property type="match status" value="1"/>
</dbReference>
<dbReference type="Gene3D" id="3.30.450.40">
    <property type="match status" value="1"/>
</dbReference>
<dbReference type="Gene3D" id="3.30.565.10">
    <property type="entry name" value="Histidine kinase-like ATPase, C-terminal domain"/>
    <property type="match status" value="1"/>
</dbReference>
<dbReference type="Gene3D" id="3.30.450.20">
    <property type="entry name" value="PAS domain"/>
    <property type="match status" value="1"/>
</dbReference>
<dbReference type="InterPro" id="IPR003018">
    <property type="entry name" value="GAF"/>
</dbReference>
<dbReference type="InterPro" id="IPR029016">
    <property type="entry name" value="GAF-like_dom_sf"/>
</dbReference>
<dbReference type="InterPro" id="IPR036890">
    <property type="entry name" value="HATPase_C_sf"/>
</dbReference>
<dbReference type="InterPro" id="IPR005467">
    <property type="entry name" value="His_kinase_dom"/>
</dbReference>
<dbReference type="InterPro" id="IPR003661">
    <property type="entry name" value="HisK_dim/P_dom"/>
</dbReference>
<dbReference type="InterPro" id="IPR036097">
    <property type="entry name" value="HisK_dim/P_sf"/>
</dbReference>
<dbReference type="InterPro" id="IPR052545">
    <property type="entry name" value="Light-responsive_reg"/>
</dbReference>
<dbReference type="InterPro" id="IPR035965">
    <property type="entry name" value="PAS-like_dom_sf"/>
</dbReference>
<dbReference type="InterPro" id="IPR013654">
    <property type="entry name" value="PAS_2"/>
</dbReference>
<dbReference type="InterPro" id="IPR016132">
    <property type="entry name" value="Phyto_chromo_attachment"/>
</dbReference>
<dbReference type="InterPro" id="IPR001294">
    <property type="entry name" value="Phytochrome"/>
</dbReference>
<dbReference type="InterPro" id="IPR013515">
    <property type="entry name" value="Phytochrome_cen-reg"/>
</dbReference>
<dbReference type="InterPro" id="IPR043150">
    <property type="entry name" value="Phytochrome_PHY_sf"/>
</dbReference>
<dbReference type="PANTHER" id="PTHR42878:SF15">
    <property type="entry name" value="BACTERIOPHYTOCHROME"/>
    <property type="match status" value="1"/>
</dbReference>
<dbReference type="PANTHER" id="PTHR42878">
    <property type="entry name" value="TWO-COMPONENT HISTIDINE KINASE"/>
    <property type="match status" value="1"/>
</dbReference>
<dbReference type="Pfam" id="PF01590">
    <property type="entry name" value="GAF"/>
    <property type="match status" value="1"/>
</dbReference>
<dbReference type="Pfam" id="PF02518">
    <property type="entry name" value="HATPase_c"/>
    <property type="match status" value="1"/>
</dbReference>
<dbReference type="Pfam" id="PF00512">
    <property type="entry name" value="HisKA"/>
    <property type="match status" value="1"/>
</dbReference>
<dbReference type="Pfam" id="PF08446">
    <property type="entry name" value="PAS_2"/>
    <property type="match status" value="1"/>
</dbReference>
<dbReference type="Pfam" id="PF00360">
    <property type="entry name" value="PHY"/>
    <property type="match status" value="1"/>
</dbReference>
<dbReference type="PRINTS" id="PR01033">
    <property type="entry name" value="PHYTOCHROME"/>
</dbReference>
<dbReference type="SMART" id="SM00065">
    <property type="entry name" value="GAF"/>
    <property type="match status" value="1"/>
</dbReference>
<dbReference type="SMART" id="SM00387">
    <property type="entry name" value="HATPase_c"/>
    <property type="match status" value="1"/>
</dbReference>
<dbReference type="SMART" id="SM00388">
    <property type="entry name" value="HisKA"/>
    <property type="match status" value="1"/>
</dbReference>
<dbReference type="SUPFAM" id="SSF55874">
    <property type="entry name" value="ATPase domain of HSP90 chaperone/DNA topoisomerase II/histidine kinase"/>
    <property type="match status" value="1"/>
</dbReference>
<dbReference type="SUPFAM" id="SSF55781">
    <property type="entry name" value="GAF domain-like"/>
    <property type="match status" value="2"/>
</dbReference>
<dbReference type="SUPFAM" id="SSF47384">
    <property type="entry name" value="Homodimeric domain of signal transducing histidine kinase"/>
    <property type="match status" value="1"/>
</dbReference>
<dbReference type="SUPFAM" id="SSF55785">
    <property type="entry name" value="PYP-like sensor domain (PAS domain)"/>
    <property type="match status" value="1"/>
</dbReference>
<dbReference type="PROSITE" id="PS50109">
    <property type="entry name" value="HIS_KIN"/>
    <property type="match status" value="1"/>
</dbReference>
<dbReference type="PROSITE" id="PS50046">
    <property type="entry name" value="PHYTOCHROME_2"/>
    <property type="match status" value="1"/>
</dbReference>
<comment type="function">
    <text evidence="1">Photoreceptor which exists in two forms that are reversibly interconvertible by light: the R form that absorbs maximally in the red region of the spectrum and the FR form that absorbs maximally in the far-red region.</text>
</comment>
<comment type="catalytic activity">
    <reaction>
        <text>ATP + protein L-histidine = ADP + protein N-phospho-L-histidine.</text>
        <dbReference type="EC" id="2.7.13.3"/>
    </reaction>
</comment>
<comment type="PTM">
    <text evidence="1">Contains one covalently linked tetrapyrrole chromophore.</text>
</comment>
<comment type="similarity">
    <text evidence="3">In the N-terminal section; belongs to the phytochrome family.</text>
</comment>
<proteinExistence type="evidence at protein level"/>
<evidence type="ECO:0000250" key="1"/>
<evidence type="ECO:0000255" key="2">
    <source>
        <dbReference type="PROSITE-ProRule" id="PRU00107"/>
    </source>
</evidence>
<evidence type="ECO:0000305" key="3"/>